<protein>
    <recommendedName>
        <fullName evidence="8">L-histidine 2-aminobutanoyltransferase</fullName>
        <ecNumber evidence="4">2.5.1.-</ecNumber>
    </recommendedName>
    <alternativeName>
        <fullName evidence="8">Nicotianamine synthase-like enzyme</fullName>
        <shortName evidence="6">NAS</shortName>
    </alternativeName>
</protein>
<feature type="chain" id="PRO_0000447035" description="L-histidine 2-aminobutanoyltransferase">
    <location>
        <begin position="1"/>
        <end position="263"/>
    </location>
</feature>
<name>NASLL_PSEAE</name>
<reference key="1">
    <citation type="journal article" date="2000" name="Nature">
        <title>Complete genome sequence of Pseudomonas aeruginosa PAO1, an opportunistic pathogen.</title>
        <authorList>
            <person name="Stover C.K."/>
            <person name="Pham X.-Q.T."/>
            <person name="Erwin A.L."/>
            <person name="Mizoguchi S.D."/>
            <person name="Warrener P."/>
            <person name="Hickey M.J."/>
            <person name="Brinkman F.S.L."/>
            <person name="Hufnagle W.O."/>
            <person name="Kowalik D.J."/>
            <person name="Lagrou M."/>
            <person name="Garber R.L."/>
            <person name="Goltry L."/>
            <person name="Tolentino E."/>
            <person name="Westbrock-Wadman S."/>
            <person name="Yuan Y."/>
            <person name="Brody L.L."/>
            <person name="Coulter S.N."/>
            <person name="Folger K.R."/>
            <person name="Kas A."/>
            <person name="Larbig K."/>
            <person name="Lim R.M."/>
            <person name="Smith K.A."/>
            <person name="Spencer D.H."/>
            <person name="Wong G.K.-S."/>
            <person name="Wu Z."/>
            <person name="Paulsen I.T."/>
            <person name="Reizer J."/>
            <person name="Saier M.H. Jr."/>
            <person name="Hancock R.E.W."/>
            <person name="Lory S."/>
            <person name="Olson M.V."/>
        </authorList>
    </citation>
    <scope>NUCLEOTIDE SEQUENCE [LARGE SCALE GENOMIC DNA]</scope>
    <source>
        <strain>ATCC 15692 / DSM 22644 / CIP 104116 / JCM 14847 / LMG 12228 / 1C / PRS 101 / PAO1</strain>
    </source>
</reference>
<reference key="2">
    <citation type="journal article" date="2015" name="Sci. Rep.">
        <title>A novel siderophore system is essential for the growth of Pseudomonas aeruginosa in airway mucus.</title>
        <authorList>
            <person name="Gi M."/>
            <person name="Lee K.M."/>
            <person name="Kim S.C."/>
            <person name="Yoon J.H."/>
            <person name="Yoon S.S."/>
            <person name="Choi J.Y."/>
        </authorList>
    </citation>
    <scope>INDUCTION</scope>
    <source>
        <strain>ATCC 15692 / DSM 22644 / CIP 104116 / JCM 14847 / LMG 12228 / 1C / PRS 101 / PAO1</strain>
    </source>
</reference>
<reference key="3">
    <citation type="journal article" date="2017" name="Mol. Microbiol.">
        <title>Growth of Pseudomonas aeruginosa in zinc poor environments is promoted by a nicotianamine-related metallophore.</title>
        <authorList>
            <person name="Mastropasqua M.C."/>
            <person name="D'Orazio M."/>
            <person name="Cerasi M."/>
            <person name="Pacello F."/>
            <person name="Gismondi A."/>
            <person name="Canini A."/>
            <person name="Canuti L."/>
            <person name="Consalvo A."/>
            <person name="Ciavardelli D."/>
            <person name="Chirullo B."/>
            <person name="Pasquali P."/>
            <person name="Battistoni A."/>
        </authorList>
    </citation>
    <scope>INDUCTION</scope>
    <source>
        <strain>ATCC 15692 / DSM 22644 / CIP 104116 / JCM 14847 / LMG 12228 / 1C / PRS 101 / PAO1</strain>
    </source>
</reference>
<reference key="4">
    <citation type="journal article" date="2017" name="Biochemistry">
        <title>Biosynthesis of an Opine Metallophore by Pseudomonas aeruginosa.</title>
        <authorList>
            <person name="McFarlane J.S."/>
            <person name="Lamb A.L."/>
        </authorList>
    </citation>
    <scope>FUNCTION</scope>
    <scope>CATALYTIC ACTIVITY</scope>
    <scope>SAM-BINDING</scope>
    <scope>BIOPHYSICOCHEMICAL PROPERTIES</scope>
    <scope>SUBSTRATE SPECIFICITY</scope>
    <source>
        <strain>ATCC 15692 / DSM 22644 / CIP 104116 / JCM 14847 / LMG 12228 / 1C / PRS 101 / PAO1</strain>
    </source>
</reference>
<evidence type="ECO:0000250" key="1">
    <source>
        <dbReference type="UniProtKB" id="A0A0H2ZHV3"/>
    </source>
</evidence>
<evidence type="ECO:0000269" key="2">
    <source>
    </source>
</evidence>
<evidence type="ECO:0000269" key="3">
    <source>
    </source>
</evidence>
<evidence type="ECO:0000269" key="4">
    <source>
    </source>
</evidence>
<evidence type="ECO:0000303" key="5">
    <source>
    </source>
</evidence>
<evidence type="ECO:0000303" key="6">
    <source>
    </source>
</evidence>
<evidence type="ECO:0000305" key="7"/>
<evidence type="ECO:0000305" key="8">
    <source>
    </source>
</evidence>
<evidence type="ECO:0000312" key="9">
    <source>
        <dbReference type="EMBL" id="AAG08221.1"/>
    </source>
</evidence>
<gene>
    <name evidence="1" type="primary">cntL</name>
    <name evidence="5" type="synonym">zrmB</name>
    <name evidence="9" type="ordered locus">PA4836</name>
</gene>
<proteinExistence type="evidence at protein level"/>
<accession>Q9HUX4</accession>
<dbReference type="EC" id="2.5.1.-" evidence="4"/>
<dbReference type="EMBL" id="AE004091">
    <property type="protein sequence ID" value="AAG08221.1"/>
    <property type="molecule type" value="Genomic_DNA"/>
</dbReference>
<dbReference type="PIR" id="H83042">
    <property type="entry name" value="H83042"/>
</dbReference>
<dbReference type="RefSeq" id="NP_253523.1">
    <property type="nucleotide sequence ID" value="NC_002516.2"/>
</dbReference>
<dbReference type="RefSeq" id="WP_003112332.1">
    <property type="nucleotide sequence ID" value="NZ_QZGE01000002.1"/>
</dbReference>
<dbReference type="SMR" id="Q9HUX4"/>
<dbReference type="STRING" id="208964.PA4836"/>
<dbReference type="PaxDb" id="208964-PA4836"/>
<dbReference type="DNASU" id="878136"/>
<dbReference type="GeneID" id="878136"/>
<dbReference type="KEGG" id="pae:PA4836"/>
<dbReference type="PATRIC" id="fig|208964.12.peg.5067"/>
<dbReference type="PseudoCAP" id="PA4836"/>
<dbReference type="HOGENOM" id="CLU_089313_0_0_6"/>
<dbReference type="InParanoid" id="Q9HUX4"/>
<dbReference type="OrthoDB" id="1956540at2"/>
<dbReference type="PhylomeDB" id="Q9HUX4"/>
<dbReference type="BioCyc" id="PAER208964:G1FZ6-4950-MONOMER"/>
<dbReference type="Proteomes" id="UP000002438">
    <property type="component" value="Chromosome"/>
</dbReference>
<dbReference type="GO" id="GO:0030410">
    <property type="term" value="F:nicotianamine synthase activity"/>
    <property type="evidence" value="ECO:0007669"/>
    <property type="project" value="InterPro"/>
</dbReference>
<dbReference type="GO" id="GO:0030418">
    <property type="term" value="P:nicotianamine biosynthetic process"/>
    <property type="evidence" value="ECO:0007669"/>
    <property type="project" value="InterPro"/>
</dbReference>
<dbReference type="Gene3D" id="3.40.50.150">
    <property type="entry name" value="Vaccinia Virus protein VP39"/>
    <property type="match status" value="1"/>
</dbReference>
<dbReference type="InterPro" id="IPR004298">
    <property type="entry name" value="Nicotian_synth"/>
</dbReference>
<dbReference type="InterPro" id="IPR029063">
    <property type="entry name" value="SAM-dependent_MTases_sf"/>
</dbReference>
<dbReference type="PANTHER" id="PTHR32266">
    <property type="entry name" value="NICOTIANAMINE SYNTHASE 3"/>
    <property type="match status" value="1"/>
</dbReference>
<dbReference type="PANTHER" id="PTHR32266:SF12">
    <property type="entry name" value="NICOTIANAMINE SYNTHASE 3"/>
    <property type="match status" value="1"/>
</dbReference>
<dbReference type="Pfam" id="PF03059">
    <property type="entry name" value="NAS"/>
    <property type="match status" value="1"/>
</dbReference>
<dbReference type="SUPFAM" id="SSF53335">
    <property type="entry name" value="S-adenosyl-L-methionine-dependent methyltransferases"/>
    <property type="match status" value="1"/>
</dbReference>
<sequence length="263" mass="28886">MQGRTPLLETLRELECEIRLLTVYARECCGCYEILRRKLDRLSGLIGEDCSRAQWQADSDDPALQALGLRLRDAAVQALCELEKHLCQGVLHEPGEMGRYLGSLLESIRGELDSAGIDADARVLFVGSGALPTSALVLAREVGAHLCCLDIDEEALGCAREIARCQGLEARMQFSSLPPAELAFSRDATHFLIASLVQQKSAVLAQIRQVMRADAKVLLRHGSGIKGLFNYPVEPAELDGWRVCAERVSQPLYDTLILEKAGR</sequence>
<comment type="function">
    <text evidence="4">Catalyzes the nucleophilic attack of one alpha-aminobutanoate moiety from SAM onto L-histidine to produce the intermediate (2S)-2-amino-4-{[(1S)-1-carboxy-2-(1H-imidazol-4-yl)ethyl]amino}butanoate. Functions in the biosynthesis of the metallophore pseudopaline, which is involved in the acquisition of nickel and zinc, and thus enables bacterial growth inside the host, where metal access is limited. Therefore, this enzyme probably contributes to Pseudomonas virulence. Appears to be specific for L-histidine as substrate.</text>
</comment>
<comment type="catalytic activity">
    <reaction evidence="4">
        <text>L-histidine + S-adenosyl-L-methionine = (2S)-2-amino-4-{[(1S)-1-carboxy-2-(1H-imidazol-4-yl)ethyl]amino}butanoate + S-methyl-5'-thioadenosine + H(+)</text>
        <dbReference type="Rhea" id="RHEA:59780"/>
        <dbReference type="ChEBI" id="CHEBI:15378"/>
        <dbReference type="ChEBI" id="CHEBI:17509"/>
        <dbReference type="ChEBI" id="CHEBI:57595"/>
        <dbReference type="ChEBI" id="CHEBI:59789"/>
        <dbReference type="ChEBI" id="CHEBI:143196"/>
    </reaction>
    <physiologicalReaction direction="left-to-right" evidence="8">
        <dbReference type="Rhea" id="RHEA:59781"/>
    </physiologicalReaction>
</comment>
<comment type="biophysicochemical properties">
    <kinetics>
        <KM evidence="4">5.4 uM for L-histidine (at pH 8 and 22 degrees Celsius)</KM>
        <text evidence="4">kcat is 1.07 min(-1) (at pH 8 and 22 degrees Celsius).</text>
    </kinetics>
</comment>
<comment type="induction">
    <text evidence="2 3">Is part of the operon cntOLMI that is negatively regulated by zinc level through the Zur repressor, which leads to transcriptional activation of this operon under zinc depletion (PubMed:28898501). Highly induced in response to airway mucus secretions (AMS) treatment (PubMed:26446565).</text>
</comment>
<comment type="similarity">
    <text evidence="7">Belongs to the methyltransferase superfamily. CntL family.</text>
</comment>
<organism>
    <name type="scientific">Pseudomonas aeruginosa (strain ATCC 15692 / DSM 22644 / CIP 104116 / JCM 14847 / LMG 12228 / 1C / PRS 101 / PAO1)</name>
    <dbReference type="NCBI Taxonomy" id="208964"/>
    <lineage>
        <taxon>Bacteria</taxon>
        <taxon>Pseudomonadati</taxon>
        <taxon>Pseudomonadota</taxon>
        <taxon>Gammaproteobacteria</taxon>
        <taxon>Pseudomonadales</taxon>
        <taxon>Pseudomonadaceae</taxon>
        <taxon>Pseudomonas</taxon>
    </lineage>
</organism>
<keyword id="KW-1185">Reference proteome</keyword>
<keyword id="KW-0949">S-adenosyl-L-methionine</keyword>
<keyword id="KW-0808">Transferase</keyword>